<feature type="chain" id="PRO_0000121231" description="Ras-related protein Rab-30">
    <location>
        <begin position="1"/>
        <end position="200"/>
    </location>
</feature>
<feature type="propeptide" id="PRO_0000370827" description="Removed in mature form" evidence="3">
    <location>
        <begin position="201"/>
        <end position="203"/>
    </location>
</feature>
<feature type="region of interest" description="Switch-I" evidence="4">
    <location>
        <begin position="36"/>
        <end position="44"/>
    </location>
</feature>
<feature type="region of interest" description="Switch-II" evidence="4">
    <location>
        <begin position="67"/>
        <end position="83"/>
    </location>
</feature>
<feature type="binding site" evidence="2">
    <location>
        <position position="20"/>
    </location>
    <ligand>
        <name>GTP</name>
        <dbReference type="ChEBI" id="CHEBI:37565"/>
    </ligand>
</feature>
<feature type="binding site" evidence="2">
    <location>
        <position position="21"/>
    </location>
    <ligand>
        <name>GTP</name>
        <dbReference type="ChEBI" id="CHEBI:37565"/>
    </ligand>
</feature>
<feature type="binding site" evidence="2">
    <location>
        <position position="22"/>
    </location>
    <ligand>
        <name>GTP</name>
        <dbReference type="ChEBI" id="CHEBI:37565"/>
    </ligand>
</feature>
<feature type="binding site" evidence="2">
    <location>
        <position position="23"/>
    </location>
    <ligand>
        <name>GTP</name>
        <dbReference type="ChEBI" id="CHEBI:37565"/>
    </ligand>
</feature>
<feature type="binding site" evidence="2">
    <location>
        <position position="23"/>
    </location>
    <ligand>
        <name>Mg(2+)</name>
        <dbReference type="ChEBI" id="CHEBI:18420"/>
    </ligand>
</feature>
<feature type="binding site" evidence="2">
    <location>
        <position position="24"/>
    </location>
    <ligand>
        <name>GTP</name>
        <dbReference type="ChEBI" id="CHEBI:37565"/>
    </ligand>
</feature>
<feature type="binding site" evidence="2">
    <location>
        <position position="41"/>
    </location>
    <ligand>
        <name>GTP</name>
        <dbReference type="ChEBI" id="CHEBI:37565"/>
    </ligand>
</feature>
<feature type="binding site" evidence="2">
    <location>
        <position position="41"/>
    </location>
    <ligand>
        <name>Mg(2+)</name>
        <dbReference type="ChEBI" id="CHEBI:18420"/>
    </ligand>
</feature>
<feature type="binding site" evidence="1">
    <location>
        <position position="64"/>
    </location>
    <ligand>
        <name>Mg(2+)</name>
        <dbReference type="ChEBI" id="CHEBI:18420"/>
    </ligand>
</feature>
<feature type="binding site" evidence="2">
    <location>
        <position position="67"/>
    </location>
    <ligand>
        <name>GTP</name>
        <dbReference type="ChEBI" id="CHEBI:37565"/>
    </ligand>
</feature>
<feature type="binding site" evidence="2">
    <location>
        <position position="122"/>
    </location>
    <ligand>
        <name>GTP</name>
        <dbReference type="ChEBI" id="CHEBI:37565"/>
    </ligand>
</feature>
<feature type="binding site" evidence="2">
    <location>
        <position position="123"/>
    </location>
    <ligand>
        <name>GTP</name>
        <dbReference type="ChEBI" id="CHEBI:37565"/>
    </ligand>
</feature>
<feature type="binding site" evidence="2">
    <location>
        <position position="125"/>
    </location>
    <ligand>
        <name>GTP</name>
        <dbReference type="ChEBI" id="CHEBI:37565"/>
    </ligand>
</feature>
<feature type="binding site" evidence="2">
    <location>
        <position position="153"/>
    </location>
    <ligand>
        <name>GTP</name>
        <dbReference type="ChEBI" id="CHEBI:37565"/>
    </ligand>
</feature>
<feature type="binding site" evidence="2">
    <location>
        <position position="154"/>
    </location>
    <ligand>
        <name>GTP</name>
        <dbReference type="ChEBI" id="CHEBI:37565"/>
    </ligand>
</feature>
<feature type="modified residue" description="Cysteine methyl ester" evidence="3">
    <location>
        <position position="200"/>
    </location>
</feature>
<feature type="lipid moiety-binding region" description="S-geranylgeranyl cysteine" evidence="1">
    <location>
        <position position="199"/>
    </location>
</feature>
<feature type="lipid moiety-binding region" description="S-geranylgeranyl cysteine" evidence="1">
    <location>
        <position position="200"/>
    </location>
</feature>
<feature type="sequence conflict" description="In Ref. 2; BAB30625." evidence="6" ref="2">
    <original>G</original>
    <variation>V</variation>
    <location>
        <position position="67"/>
    </location>
</feature>
<sequence length="203" mass="23058">MSMEDYDFLFKIVLIGNAGVGKTCLVRRFTQGLFPPGQGATIGVDFMIKTVEINGEKVKLQIWDTAGQERFRSITQSYYRSANALILTYDITCEESFRCLPEWLREIEQYASNKVITVLVGNKIDLAERREVSQQRAEEFSEAQDMYYLETSAKESDNVEKLFLDLACRLISEARQNTLVNNVSSPLPGEGKSISYLTCCNFN</sequence>
<proteinExistence type="evidence at protein level"/>
<protein>
    <recommendedName>
        <fullName>Ras-related protein Rab-30</fullName>
        <ecNumber evidence="1">3.6.5.2</ecNumber>
    </recommendedName>
</protein>
<gene>
    <name evidence="7" type="primary">Rab30</name>
    <name type="synonym">Rsb30</name>
</gene>
<accession>Q923S9</accession>
<accession>Q3UQR3</accession>
<accession>Q9D3Q6</accession>
<dbReference type="EC" id="3.6.5.2" evidence="1"/>
<dbReference type="EMBL" id="AF399756">
    <property type="protein sequence ID" value="AAK94019.1"/>
    <property type="molecule type" value="mRNA"/>
</dbReference>
<dbReference type="EMBL" id="AK017185">
    <property type="protein sequence ID" value="BAB30625.1"/>
    <property type="molecule type" value="mRNA"/>
</dbReference>
<dbReference type="EMBL" id="AK142206">
    <property type="protein sequence ID" value="BAE24976.1"/>
    <property type="molecule type" value="mRNA"/>
</dbReference>
<dbReference type="EMBL" id="BC017550">
    <property type="protein sequence ID" value="AAH17550.1"/>
    <property type="molecule type" value="mRNA"/>
</dbReference>
<dbReference type="CCDS" id="CCDS21450.1"/>
<dbReference type="RefSeq" id="NP_083770.2">
    <property type="nucleotide sequence ID" value="NM_029494.2"/>
</dbReference>
<dbReference type="RefSeq" id="XP_006508356.1">
    <property type="nucleotide sequence ID" value="XM_006508293.5"/>
</dbReference>
<dbReference type="RefSeq" id="XP_006508357.1">
    <property type="nucleotide sequence ID" value="XM_006508294.3"/>
</dbReference>
<dbReference type="RefSeq" id="XP_030098934.1">
    <property type="nucleotide sequence ID" value="XM_030243074.2"/>
</dbReference>
<dbReference type="RefSeq" id="XP_030098935.1">
    <property type="nucleotide sequence ID" value="XM_030243075.2"/>
</dbReference>
<dbReference type="SMR" id="Q923S9"/>
<dbReference type="BioGRID" id="217887">
    <property type="interactions" value="1"/>
</dbReference>
<dbReference type="FunCoup" id="Q923S9">
    <property type="interactions" value="1752"/>
</dbReference>
<dbReference type="IntAct" id="Q923S9">
    <property type="interactions" value="5"/>
</dbReference>
<dbReference type="MINT" id="Q923S9"/>
<dbReference type="STRING" id="10090.ENSMUSP00000032879"/>
<dbReference type="GlyGen" id="Q923S9">
    <property type="glycosylation" value="1 site, 1 N-linked glycan (1 site)"/>
</dbReference>
<dbReference type="iPTMnet" id="Q923S9"/>
<dbReference type="PhosphoSitePlus" id="Q923S9"/>
<dbReference type="jPOST" id="Q923S9"/>
<dbReference type="PaxDb" id="10090-ENSMUSP00000032879"/>
<dbReference type="ProteomicsDB" id="300376"/>
<dbReference type="Pumba" id="Q923S9"/>
<dbReference type="Antibodypedia" id="31346">
    <property type="antibodies" value="301 antibodies from 25 providers"/>
</dbReference>
<dbReference type="DNASU" id="75985"/>
<dbReference type="Ensembl" id="ENSMUST00000032879.15">
    <property type="protein sequence ID" value="ENSMUSP00000032879.8"/>
    <property type="gene ID" value="ENSMUSG00000030643.15"/>
</dbReference>
<dbReference type="Ensembl" id="ENSMUST00000107180.8">
    <property type="protein sequence ID" value="ENSMUSP00000102798.2"/>
    <property type="gene ID" value="ENSMUSG00000030643.15"/>
</dbReference>
<dbReference type="GeneID" id="75985"/>
<dbReference type="KEGG" id="mmu:75985"/>
<dbReference type="UCSC" id="uc009iif.1">
    <property type="organism name" value="mouse"/>
</dbReference>
<dbReference type="AGR" id="MGI:1923235"/>
<dbReference type="CTD" id="27314"/>
<dbReference type="MGI" id="MGI:1923235">
    <property type="gene designation" value="Rab30"/>
</dbReference>
<dbReference type="VEuPathDB" id="HostDB:ENSMUSG00000030643"/>
<dbReference type="eggNOG" id="KOG0095">
    <property type="taxonomic scope" value="Eukaryota"/>
</dbReference>
<dbReference type="GeneTree" id="ENSGT00940000156875"/>
<dbReference type="HOGENOM" id="CLU_041217_10_1_1"/>
<dbReference type="InParanoid" id="Q923S9"/>
<dbReference type="OMA" id="VYDVSCQ"/>
<dbReference type="OrthoDB" id="9989112at2759"/>
<dbReference type="PhylomeDB" id="Q923S9"/>
<dbReference type="TreeFam" id="TF300097"/>
<dbReference type="Reactome" id="R-MMU-6811438">
    <property type="pathway name" value="Intra-Golgi traffic"/>
</dbReference>
<dbReference type="Reactome" id="R-MMU-8873719">
    <property type="pathway name" value="RAB geranylgeranylation"/>
</dbReference>
<dbReference type="BioGRID-ORCS" id="75985">
    <property type="hits" value="1 hit in 76 CRISPR screens"/>
</dbReference>
<dbReference type="ChiTaRS" id="Rab30">
    <property type="organism name" value="mouse"/>
</dbReference>
<dbReference type="PRO" id="PR:Q923S9"/>
<dbReference type="Proteomes" id="UP000000589">
    <property type="component" value="Chromosome 7"/>
</dbReference>
<dbReference type="RNAct" id="Q923S9">
    <property type="molecule type" value="protein"/>
</dbReference>
<dbReference type="Bgee" id="ENSMUSG00000030643">
    <property type="expression patterns" value="Expressed in small intestine Peyer's patch and 214 other cell types or tissues"/>
</dbReference>
<dbReference type="ExpressionAtlas" id="Q923S9">
    <property type="expression patterns" value="baseline and differential"/>
</dbReference>
<dbReference type="GO" id="GO:0005801">
    <property type="term" value="C:cis-Golgi network"/>
    <property type="evidence" value="ECO:0000250"/>
    <property type="project" value="UniProtKB"/>
</dbReference>
<dbReference type="GO" id="GO:0031985">
    <property type="term" value="C:Golgi cisterna"/>
    <property type="evidence" value="ECO:0000250"/>
    <property type="project" value="UniProtKB"/>
</dbReference>
<dbReference type="GO" id="GO:0016020">
    <property type="term" value="C:membrane"/>
    <property type="evidence" value="ECO:0007669"/>
    <property type="project" value="UniProtKB-SubCell"/>
</dbReference>
<dbReference type="GO" id="GO:0005802">
    <property type="term" value="C:trans-Golgi network"/>
    <property type="evidence" value="ECO:0000250"/>
    <property type="project" value="UniProtKB"/>
</dbReference>
<dbReference type="GO" id="GO:0005525">
    <property type="term" value="F:GTP binding"/>
    <property type="evidence" value="ECO:0007669"/>
    <property type="project" value="UniProtKB-KW"/>
</dbReference>
<dbReference type="GO" id="GO:0003924">
    <property type="term" value="F:GTPase activity"/>
    <property type="evidence" value="ECO:0007669"/>
    <property type="project" value="InterPro"/>
</dbReference>
<dbReference type="GO" id="GO:0007030">
    <property type="term" value="P:Golgi organization"/>
    <property type="evidence" value="ECO:0000250"/>
    <property type="project" value="UniProtKB"/>
</dbReference>
<dbReference type="GO" id="GO:0032482">
    <property type="term" value="P:Rab protein signal transduction"/>
    <property type="evidence" value="ECO:0007669"/>
    <property type="project" value="InterPro"/>
</dbReference>
<dbReference type="CDD" id="cd04114">
    <property type="entry name" value="Rab30"/>
    <property type="match status" value="1"/>
</dbReference>
<dbReference type="FunFam" id="3.40.50.300:FF:000440">
    <property type="entry name" value="Ras-related protein Rab-30"/>
    <property type="match status" value="1"/>
</dbReference>
<dbReference type="Gene3D" id="3.40.50.300">
    <property type="entry name" value="P-loop containing nucleotide triphosphate hydrolases"/>
    <property type="match status" value="1"/>
</dbReference>
<dbReference type="InterPro" id="IPR027417">
    <property type="entry name" value="P-loop_NTPase"/>
</dbReference>
<dbReference type="InterPro" id="IPR050227">
    <property type="entry name" value="Rab"/>
</dbReference>
<dbReference type="InterPro" id="IPR041820">
    <property type="entry name" value="Rab30"/>
</dbReference>
<dbReference type="InterPro" id="IPR005225">
    <property type="entry name" value="Small_GTP-bd"/>
</dbReference>
<dbReference type="InterPro" id="IPR001806">
    <property type="entry name" value="Small_GTPase"/>
</dbReference>
<dbReference type="NCBIfam" id="TIGR00231">
    <property type="entry name" value="small_GTP"/>
    <property type="match status" value="1"/>
</dbReference>
<dbReference type="PANTHER" id="PTHR47977">
    <property type="entry name" value="RAS-RELATED PROTEIN RAB"/>
    <property type="match status" value="1"/>
</dbReference>
<dbReference type="Pfam" id="PF00071">
    <property type="entry name" value="Ras"/>
    <property type="match status" value="1"/>
</dbReference>
<dbReference type="PRINTS" id="PR00449">
    <property type="entry name" value="RASTRNSFRMNG"/>
</dbReference>
<dbReference type="SMART" id="SM00175">
    <property type="entry name" value="RAB"/>
    <property type="match status" value="1"/>
</dbReference>
<dbReference type="SMART" id="SM00176">
    <property type="entry name" value="RAN"/>
    <property type="match status" value="1"/>
</dbReference>
<dbReference type="SMART" id="SM00173">
    <property type="entry name" value="RAS"/>
    <property type="match status" value="1"/>
</dbReference>
<dbReference type="SMART" id="SM00174">
    <property type="entry name" value="RHO"/>
    <property type="match status" value="1"/>
</dbReference>
<dbReference type="SUPFAM" id="SSF52540">
    <property type="entry name" value="P-loop containing nucleoside triphosphate hydrolases"/>
    <property type="match status" value="1"/>
</dbReference>
<dbReference type="PROSITE" id="PS51419">
    <property type="entry name" value="RAB"/>
    <property type="match status" value="1"/>
</dbReference>
<evidence type="ECO:0000250" key="1">
    <source>
        <dbReference type="UniProtKB" id="P62820"/>
    </source>
</evidence>
<evidence type="ECO:0000250" key="2">
    <source>
        <dbReference type="UniProtKB" id="Q15771"/>
    </source>
</evidence>
<evidence type="ECO:0000255" key="3"/>
<evidence type="ECO:0000255" key="4">
    <source>
        <dbReference type="PROSITE-ProRule" id="PRU00753"/>
    </source>
</evidence>
<evidence type="ECO:0000269" key="5">
    <source>
    </source>
</evidence>
<evidence type="ECO:0000305" key="6"/>
<evidence type="ECO:0000312" key="7">
    <source>
        <dbReference type="MGI" id="MGI:1923235"/>
    </source>
</evidence>
<comment type="function">
    <text evidence="2 5">The small GTPases Rab are key regulators of intracellular membrane trafficking, from the formation of transport vesicles to their fusion with membranes. Rabs cycle between an inactive GDP-bound form and an active GTP-bound form that is able to recruit to membranes different sets of downstream effectors directly responsible for vesicle formation, movement, tethering and fusion (PubMed:38796472). RAB30 is required for maintaining the structural integrity of the Golgi apparatus, possibly by mediating interactions with cytoplasmic scaffolding proteins (By similarity). Facilitates lipid homeostasis during fasting by regulating hepatic protein and lipid trafficking in a PPAR-alpha-dependent manner (PubMed:38796472). Promotes autophagosome biogenesis during bacterial infection such as group A Streptococcus infection (By similarity).</text>
</comment>
<comment type="catalytic activity">
    <reaction evidence="1">
        <text>GTP + H2O = GDP + phosphate + H(+)</text>
        <dbReference type="Rhea" id="RHEA:19669"/>
        <dbReference type="ChEBI" id="CHEBI:15377"/>
        <dbReference type="ChEBI" id="CHEBI:15378"/>
        <dbReference type="ChEBI" id="CHEBI:37565"/>
        <dbReference type="ChEBI" id="CHEBI:43474"/>
        <dbReference type="ChEBI" id="CHEBI:58189"/>
        <dbReference type="EC" id="3.6.5.2"/>
    </reaction>
    <physiologicalReaction direction="left-to-right" evidence="1">
        <dbReference type="Rhea" id="RHEA:19670"/>
    </physiologicalReaction>
</comment>
<comment type="cofactor">
    <cofactor evidence="2">
        <name>Mg(2+)</name>
        <dbReference type="ChEBI" id="CHEBI:18420"/>
    </cofactor>
</comment>
<comment type="activity regulation">
    <text evidence="6">Regulated by guanine nucleotide exchange factors (GEFs) which promote the exchange of bound GDP for free GTP. Regulated by GTPase activating proteins (GAPs) which increase the GTP hydrolysis activity (Probable). Inhibited by GDP dissociation inhibitors (GDIs) (Probable).</text>
</comment>
<comment type="subcellular location">
    <subcellularLocation>
        <location evidence="6">Membrane</location>
        <topology evidence="6">Lipid-anchor</topology>
        <orientation evidence="6">Cytoplasmic side</orientation>
    </subcellularLocation>
    <subcellularLocation>
        <location evidence="2">Golgi apparatus</location>
        <location evidence="2">trans-Golgi network membrane</location>
    </subcellularLocation>
    <subcellularLocation>
        <location evidence="2">Golgi apparatus</location>
        <location evidence="2">cis-Golgi network membrane</location>
    </subcellularLocation>
    <subcellularLocation>
        <location evidence="5">Golgi apparatus membrane</location>
    </subcellularLocation>
    <subcellularLocation>
        <location evidence="2">Cytoplasm</location>
    </subcellularLocation>
    <subcellularLocation>
        <location evidence="2">Cytoplasmic vesicle</location>
        <location evidence="2">Autophagosome membrane</location>
    </subcellularLocation>
    <subcellularLocation>
        <location evidence="2">Autolysosome membrane</location>
    </subcellularLocation>
    <text evidence="2 5">Localized to dynamic membranes fusing to and exiting from the Golgi apparatus (PubMed:38796472). Localized to group A Streptococcus (GAS)-containing autophagosome to autolysosome in GAS-infected epithelial cells (By similarity). Also colocalized with a starvation-induced autophagosome although not required for autophagosome formation during starvation (By similarity).</text>
</comment>
<comment type="induction">
    <text evidence="5">Induced by PPAR-alpha-mediated fasting in liver.</text>
</comment>
<comment type="domain">
    <text evidence="1">Switch I, switch II and the interswitch regions are characteristic of Rab GTPases and mediate the interactions with Rab downstream effectors. The switch regions undergo conformational changes upon nucleotide binding which drive interaction with specific sets of effector proteins, with most effectors only binding to GTP-bound Rab.</text>
</comment>
<comment type="disruption phenotype">
    <text evidence="5">Knockout mice are viable and fertile. Minimal effects on fed and fasting bodyweight, apart from males being larger on average than control males in the fasted state. No change in fed or fasting blood glucose measurements in knockout males; however, increased female blood glucose level in fasted state (PubMed:38796472). Knockout mice show decreased fasting-induced serum triglycerides (PubMed:38796472).</text>
</comment>
<comment type="similarity">
    <text evidence="6">Belongs to the small GTPase superfamily. Rab family.</text>
</comment>
<reference key="1">
    <citation type="submission" date="2001-07" db="EMBL/GenBank/DDBJ databases">
        <authorList>
            <person name="Hong W."/>
        </authorList>
    </citation>
    <scope>NUCLEOTIDE SEQUENCE [MRNA]</scope>
    <source>
        <strain>C57BL/6J</strain>
    </source>
</reference>
<reference key="2">
    <citation type="journal article" date="2005" name="Science">
        <title>The transcriptional landscape of the mammalian genome.</title>
        <authorList>
            <person name="Carninci P."/>
            <person name="Kasukawa T."/>
            <person name="Katayama S."/>
            <person name="Gough J."/>
            <person name="Frith M.C."/>
            <person name="Maeda N."/>
            <person name="Oyama R."/>
            <person name="Ravasi T."/>
            <person name="Lenhard B."/>
            <person name="Wells C."/>
            <person name="Kodzius R."/>
            <person name="Shimokawa K."/>
            <person name="Bajic V.B."/>
            <person name="Brenner S.E."/>
            <person name="Batalov S."/>
            <person name="Forrest A.R."/>
            <person name="Zavolan M."/>
            <person name="Davis M.J."/>
            <person name="Wilming L.G."/>
            <person name="Aidinis V."/>
            <person name="Allen J.E."/>
            <person name="Ambesi-Impiombato A."/>
            <person name="Apweiler R."/>
            <person name="Aturaliya R.N."/>
            <person name="Bailey T.L."/>
            <person name="Bansal M."/>
            <person name="Baxter L."/>
            <person name="Beisel K.W."/>
            <person name="Bersano T."/>
            <person name="Bono H."/>
            <person name="Chalk A.M."/>
            <person name="Chiu K.P."/>
            <person name="Choudhary V."/>
            <person name="Christoffels A."/>
            <person name="Clutterbuck D.R."/>
            <person name="Crowe M.L."/>
            <person name="Dalla E."/>
            <person name="Dalrymple B.P."/>
            <person name="de Bono B."/>
            <person name="Della Gatta G."/>
            <person name="di Bernardo D."/>
            <person name="Down T."/>
            <person name="Engstrom P."/>
            <person name="Fagiolini M."/>
            <person name="Faulkner G."/>
            <person name="Fletcher C.F."/>
            <person name="Fukushima T."/>
            <person name="Furuno M."/>
            <person name="Futaki S."/>
            <person name="Gariboldi M."/>
            <person name="Georgii-Hemming P."/>
            <person name="Gingeras T.R."/>
            <person name="Gojobori T."/>
            <person name="Green R.E."/>
            <person name="Gustincich S."/>
            <person name="Harbers M."/>
            <person name="Hayashi Y."/>
            <person name="Hensch T.K."/>
            <person name="Hirokawa N."/>
            <person name="Hill D."/>
            <person name="Huminiecki L."/>
            <person name="Iacono M."/>
            <person name="Ikeo K."/>
            <person name="Iwama A."/>
            <person name="Ishikawa T."/>
            <person name="Jakt M."/>
            <person name="Kanapin A."/>
            <person name="Katoh M."/>
            <person name="Kawasawa Y."/>
            <person name="Kelso J."/>
            <person name="Kitamura H."/>
            <person name="Kitano H."/>
            <person name="Kollias G."/>
            <person name="Krishnan S.P."/>
            <person name="Kruger A."/>
            <person name="Kummerfeld S.K."/>
            <person name="Kurochkin I.V."/>
            <person name="Lareau L.F."/>
            <person name="Lazarevic D."/>
            <person name="Lipovich L."/>
            <person name="Liu J."/>
            <person name="Liuni S."/>
            <person name="McWilliam S."/>
            <person name="Madan Babu M."/>
            <person name="Madera M."/>
            <person name="Marchionni L."/>
            <person name="Matsuda H."/>
            <person name="Matsuzawa S."/>
            <person name="Miki H."/>
            <person name="Mignone F."/>
            <person name="Miyake S."/>
            <person name="Morris K."/>
            <person name="Mottagui-Tabar S."/>
            <person name="Mulder N."/>
            <person name="Nakano N."/>
            <person name="Nakauchi H."/>
            <person name="Ng P."/>
            <person name="Nilsson R."/>
            <person name="Nishiguchi S."/>
            <person name="Nishikawa S."/>
            <person name="Nori F."/>
            <person name="Ohara O."/>
            <person name="Okazaki Y."/>
            <person name="Orlando V."/>
            <person name="Pang K.C."/>
            <person name="Pavan W.J."/>
            <person name="Pavesi G."/>
            <person name="Pesole G."/>
            <person name="Petrovsky N."/>
            <person name="Piazza S."/>
            <person name="Reed J."/>
            <person name="Reid J.F."/>
            <person name="Ring B.Z."/>
            <person name="Ringwald M."/>
            <person name="Rost B."/>
            <person name="Ruan Y."/>
            <person name="Salzberg S.L."/>
            <person name="Sandelin A."/>
            <person name="Schneider C."/>
            <person name="Schoenbach C."/>
            <person name="Sekiguchi K."/>
            <person name="Semple C.A."/>
            <person name="Seno S."/>
            <person name="Sessa L."/>
            <person name="Sheng Y."/>
            <person name="Shibata Y."/>
            <person name="Shimada H."/>
            <person name="Shimada K."/>
            <person name="Silva D."/>
            <person name="Sinclair B."/>
            <person name="Sperling S."/>
            <person name="Stupka E."/>
            <person name="Sugiura K."/>
            <person name="Sultana R."/>
            <person name="Takenaka Y."/>
            <person name="Taki K."/>
            <person name="Tammoja K."/>
            <person name="Tan S.L."/>
            <person name="Tang S."/>
            <person name="Taylor M.S."/>
            <person name="Tegner J."/>
            <person name="Teichmann S.A."/>
            <person name="Ueda H.R."/>
            <person name="van Nimwegen E."/>
            <person name="Verardo R."/>
            <person name="Wei C.L."/>
            <person name="Yagi K."/>
            <person name="Yamanishi H."/>
            <person name="Zabarovsky E."/>
            <person name="Zhu S."/>
            <person name="Zimmer A."/>
            <person name="Hide W."/>
            <person name="Bult C."/>
            <person name="Grimmond S.M."/>
            <person name="Teasdale R.D."/>
            <person name="Liu E.T."/>
            <person name="Brusic V."/>
            <person name="Quackenbush J."/>
            <person name="Wahlestedt C."/>
            <person name="Mattick J.S."/>
            <person name="Hume D.A."/>
            <person name="Kai C."/>
            <person name="Sasaki D."/>
            <person name="Tomaru Y."/>
            <person name="Fukuda S."/>
            <person name="Kanamori-Katayama M."/>
            <person name="Suzuki M."/>
            <person name="Aoki J."/>
            <person name="Arakawa T."/>
            <person name="Iida J."/>
            <person name="Imamura K."/>
            <person name="Itoh M."/>
            <person name="Kato T."/>
            <person name="Kawaji H."/>
            <person name="Kawagashira N."/>
            <person name="Kawashima T."/>
            <person name="Kojima M."/>
            <person name="Kondo S."/>
            <person name="Konno H."/>
            <person name="Nakano K."/>
            <person name="Ninomiya N."/>
            <person name="Nishio T."/>
            <person name="Okada M."/>
            <person name="Plessy C."/>
            <person name="Shibata K."/>
            <person name="Shiraki T."/>
            <person name="Suzuki S."/>
            <person name="Tagami M."/>
            <person name="Waki K."/>
            <person name="Watahiki A."/>
            <person name="Okamura-Oho Y."/>
            <person name="Suzuki H."/>
            <person name="Kawai J."/>
            <person name="Hayashizaki Y."/>
        </authorList>
    </citation>
    <scope>NUCLEOTIDE SEQUENCE [LARGE SCALE MRNA]</scope>
    <source>
        <strain>C57BL/6J</strain>
        <tissue>Heart</tissue>
        <tissue>Ovary</tissue>
        <tissue>Uterus</tissue>
    </source>
</reference>
<reference key="3">
    <citation type="journal article" date="2004" name="Genome Res.">
        <title>The status, quality, and expansion of the NIH full-length cDNA project: the Mammalian Gene Collection (MGC).</title>
        <authorList>
            <consortium name="The MGC Project Team"/>
        </authorList>
    </citation>
    <scope>NUCLEOTIDE SEQUENCE [LARGE SCALE MRNA]</scope>
    <source>
        <strain>C57BL/6J</strain>
        <tissue>Eye</tissue>
    </source>
</reference>
<reference key="4">
    <citation type="journal article" date="2010" name="Cell">
        <title>A tissue-specific atlas of mouse protein phosphorylation and expression.</title>
        <authorList>
            <person name="Huttlin E.L."/>
            <person name="Jedrychowski M.P."/>
            <person name="Elias J.E."/>
            <person name="Goswami T."/>
            <person name="Rad R."/>
            <person name="Beausoleil S.A."/>
            <person name="Villen J."/>
            <person name="Haas W."/>
            <person name="Sowa M.E."/>
            <person name="Gygi S.P."/>
        </authorList>
    </citation>
    <scope>IDENTIFICATION BY MASS SPECTROMETRY [LARGE SCALE ANALYSIS]</scope>
    <source>
        <tissue>Brain</tissue>
    </source>
</reference>
<reference key="5">
    <citation type="journal article" date="2024" name="Nat. Commun.">
        <title>Rab30 facilitates lipid homeostasis during fasting.</title>
        <authorList>
            <person name="Smith D.M."/>
            <person name="Liu B.Y."/>
            <person name="Wolfgang M.J."/>
        </authorList>
    </citation>
    <scope>FUNCTION</scope>
    <scope>SUBCELLULAR LOCATION</scope>
    <scope>INDUCTION BY FASTING</scope>
    <scope>DISRUPTION PHENOTYPE</scope>
</reference>
<name>RAB30_MOUSE</name>
<keyword id="KW-0963">Cytoplasm</keyword>
<keyword id="KW-0968">Cytoplasmic vesicle</keyword>
<keyword id="KW-0333">Golgi apparatus</keyword>
<keyword id="KW-0342">GTP-binding</keyword>
<keyword id="KW-0378">Hydrolase</keyword>
<keyword id="KW-0449">Lipoprotein</keyword>
<keyword id="KW-0458">Lysosome</keyword>
<keyword id="KW-0460">Magnesium</keyword>
<keyword id="KW-0472">Membrane</keyword>
<keyword id="KW-0479">Metal-binding</keyword>
<keyword id="KW-0488">Methylation</keyword>
<keyword id="KW-0547">Nucleotide-binding</keyword>
<keyword id="KW-0636">Prenylation</keyword>
<keyword id="KW-1185">Reference proteome</keyword>
<organism>
    <name type="scientific">Mus musculus</name>
    <name type="common">Mouse</name>
    <dbReference type="NCBI Taxonomy" id="10090"/>
    <lineage>
        <taxon>Eukaryota</taxon>
        <taxon>Metazoa</taxon>
        <taxon>Chordata</taxon>
        <taxon>Craniata</taxon>
        <taxon>Vertebrata</taxon>
        <taxon>Euteleostomi</taxon>
        <taxon>Mammalia</taxon>
        <taxon>Eutheria</taxon>
        <taxon>Euarchontoglires</taxon>
        <taxon>Glires</taxon>
        <taxon>Rodentia</taxon>
        <taxon>Myomorpha</taxon>
        <taxon>Muroidea</taxon>
        <taxon>Muridae</taxon>
        <taxon>Murinae</taxon>
        <taxon>Mus</taxon>
        <taxon>Mus</taxon>
    </lineage>
</organism>